<organism>
    <name type="scientific">Saccharomyces cerevisiae (strain RM11-1a)</name>
    <name type="common">Baker's yeast</name>
    <dbReference type="NCBI Taxonomy" id="285006"/>
    <lineage>
        <taxon>Eukaryota</taxon>
        <taxon>Fungi</taxon>
        <taxon>Dikarya</taxon>
        <taxon>Ascomycota</taxon>
        <taxon>Saccharomycotina</taxon>
        <taxon>Saccharomycetes</taxon>
        <taxon>Saccharomycetales</taxon>
        <taxon>Saccharomycetaceae</taxon>
        <taxon>Saccharomyces</taxon>
    </lineage>
</organism>
<sequence length="204" mass="22843">MGNASVAVGTAVGIPIAVGVIIALIFWCKLQRRYKKEEIRDADLEKMVMEEVAVSVYDGFKAEINSSSEASTINEKEANQDLKPCQEKTAKAGYTPAYRRQLNASMGTLRPKKQSTAYINVPVIFSGEKVNYGMVRDPSYSFMYPLTLSRKETSSLRSASTSNLSSSTENTALHEEIKLDDPYENDFTNYTVNKREFIDSLRPR</sequence>
<protein>
    <recommendedName>
        <fullName>Altered inheritance of mitochondria protein 20</fullName>
    </recommendedName>
</protein>
<name>AIM20_YEAS1</name>
<comment type="function">
    <text evidence="1">Involved in cell cycle progression and surviving DNA damage.</text>
</comment>
<comment type="subcellular location">
    <subcellularLocation>
        <location evidence="1">Vacuole membrane</location>
        <topology evidence="1">Single-pass membrane protein</topology>
    </subcellularLocation>
</comment>
<comment type="similarity">
    <text evidence="3">Belongs to the SKG1 family.</text>
</comment>
<evidence type="ECO:0000250" key="1"/>
<evidence type="ECO:0000255" key="2"/>
<evidence type="ECO:0000305" key="3"/>
<dbReference type="EMBL" id="CH408055">
    <property type="protein sequence ID" value="EDV09637.1"/>
    <property type="molecule type" value="Genomic_DNA"/>
</dbReference>
<dbReference type="HOGENOM" id="CLU_116407_0_0_1"/>
<dbReference type="OrthoDB" id="32958at4893"/>
<dbReference type="Proteomes" id="UP000008335">
    <property type="component" value="Unassembled WGS sequence"/>
</dbReference>
<dbReference type="GO" id="GO:0005774">
    <property type="term" value="C:vacuolar membrane"/>
    <property type="evidence" value="ECO:0007669"/>
    <property type="project" value="UniProtKB-SubCell"/>
</dbReference>
<feature type="chain" id="PRO_0000399678" description="Altered inheritance of mitochondria protein 20">
    <location>
        <begin position="1"/>
        <end position="204"/>
    </location>
</feature>
<feature type="transmembrane region" description="Helical" evidence="2">
    <location>
        <begin position="6"/>
        <end position="26"/>
    </location>
</feature>
<accession>B3LU06</accession>
<keyword id="KW-0131">Cell cycle</keyword>
<keyword id="KW-0472">Membrane</keyword>
<keyword id="KW-0812">Transmembrane</keyword>
<keyword id="KW-1133">Transmembrane helix</keyword>
<keyword id="KW-0926">Vacuole</keyword>
<proteinExistence type="inferred from homology"/>
<reference key="1">
    <citation type="submission" date="2005-03" db="EMBL/GenBank/DDBJ databases">
        <title>Annotation of the Saccharomyces cerevisiae RM11-1a genome.</title>
        <authorList>
            <consortium name="The Broad Institute Genome Sequencing Platform"/>
            <person name="Birren B.W."/>
            <person name="Lander E.S."/>
            <person name="Galagan J.E."/>
            <person name="Nusbaum C."/>
            <person name="Devon K."/>
            <person name="Cuomo C."/>
            <person name="Jaffe D.B."/>
            <person name="Butler J."/>
            <person name="Alvarez P."/>
            <person name="Gnerre S."/>
            <person name="Grabherr M."/>
            <person name="Kleber M."/>
            <person name="Mauceli E.W."/>
            <person name="Brockman W."/>
            <person name="MacCallum I.A."/>
            <person name="Rounsley S."/>
            <person name="Young S.K."/>
            <person name="LaButti K."/>
            <person name="Pushparaj V."/>
            <person name="DeCaprio D."/>
            <person name="Crawford M."/>
            <person name="Koehrsen M."/>
            <person name="Engels R."/>
            <person name="Montgomery P."/>
            <person name="Pearson M."/>
            <person name="Howarth C."/>
            <person name="Larson L."/>
            <person name="Luoma S."/>
            <person name="White J."/>
            <person name="O'Leary S."/>
            <person name="Kodira C.D."/>
            <person name="Zeng Q."/>
            <person name="Yandava C."/>
            <person name="Alvarado L."/>
            <person name="Pratt S."/>
            <person name="Kruglyak L."/>
        </authorList>
    </citation>
    <scope>NUCLEOTIDE SEQUENCE [LARGE SCALE GENOMIC DNA]</scope>
    <source>
        <strain>RM11-1a</strain>
    </source>
</reference>
<gene>
    <name type="primary">AIM20</name>
    <name type="ORF">SCRG_05331</name>
</gene>